<evidence type="ECO:0000255" key="1">
    <source>
        <dbReference type="HAMAP-Rule" id="MF_01161"/>
    </source>
</evidence>
<sequence>MAKKDAYKLTYNTSDTLFATNLGDILAPSFASIKQTRNLLGFSSGVDSTALFFLLLECEIPFDIAIVHYHTRLQADDEVAYAKELAATYNKLCFVAHAPHFNANFESNARSFRFDFFQSLIIKHHYTHLLLAHQLNDRLEWLLMQLTKGAGLGNLLGFADERYNYDKSLNNYTIVRPLESIPKNELYRFCKERGIKYFEDSSNQDKTFRRNYFRYEFCDKLVNEFSAGIARSLSYLQRDRQSLENMLYADTLELESLKMQILRQIHNISVPMHTHKICCIIFSIHKSKVQDDENLLLLFCDKVAKQCGYVLSAAQRDEISKSRFNCKIAHFIITSNTHRIYIAQDSMSMYKIVTQSPMSKKFKIFCASHRVPSKLRFLLWAEFCAWEMLCKSAYADADYLVNEQGNQHLFTHFLAKIDNFFTL</sequence>
<accession>Q7VGR5</accession>
<gene>
    <name evidence="1" type="primary">tilS</name>
    <name type="ordered locus">HH_1255</name>
</gene>
<organism>
    <name type="scientific">Helicobacter hepaticus (strain ATCC 51449 / 3B1)</name>
    <dbReference type="NCBI Taxonomy" id="235279"/>
    <lineage>
        <taxon>Bacteria</taxon>
        <taxon>Pseudomonadati</taxon>
        <taxon>Campylobacterota</taxon>
        <taxon>Epsilonproteobacteria</taxon>
        <taxon>Campylobacterales</taxon>
        <taxon>Helicobacteraceae</taxon>
        <taxon>Helicobacter</taxon>
    </lineage>
</organism>
<keyword id="KW-0067">ATP-binding</keyword>
<keyword id="KW-0963">Cytoplasm</keyword>
<keyword id="KW-0436">Ligase</keyword>
<keyword id="KW-0547">Nucleotide-binding</keyword>
<keyword id="KW-1185">Reference proteome</keyword>
<keyword id="KW-0819">tRNA processing</keyword>
<dbReference type="EC" id="6.3.4.19" evidence="1"/>
<dbReference type="EMBL" id="AE017125">
    <property type="protein sequence ID" value="AAP77852.1"/>
    <property type="molecule type" value="Genomic_DNA"/>
</dbReference>
<dbReference type="RefSeq" id="WP_011116095.1">
    <property type="nucleotide sequence ID" value="NC_004917.1"/>
</dbReference>
<dbReference type="SMR" id="Q7VGR5"/>
<dbReference type="STRING" id="235279.HH_1255"/>
<dbReference type="KEGG" id="hhe:HH_1255"/>
<dbReference type="eggNOG" id="COG0037">
    <property type="taxonomic scope" value="Bacteria"/>
</dbReference>
<dbReference type="HOGENOM" id="CLU_053500_0_0_7"/>
<dbReference type="OrthoDB" id="5289653at2"/>
<dbReference type="Proteomes" id="UP000002495">
    <property type="component" value="Chromosome"/>
</dbReference>
<dbReference type="GO" id="GO:0005737">
    <property type="term" value="C:cytoplasm"/>
    <property type="evidence" value="ECO:0007669"/>
    <property type="project" value="UniProtKB-SubCell"/>
</dbReference>
<dbReference type="GO" id="GO:0005524">
    <property type="term" value="F:ATP binding"/>
    <property type="evidence" value="ECO:0007669"/>
    <property type="project" value="UniProtKB-KW"/>
</dbReference>
<dbReference type="GO" id="GO:0032267">
    <property type="term" value="F:tRNA(Ile)-lysidine synthase activity"/>
    <property type="evidence" value="ECO:0007669"/>
    <property type="project" value="UniProtKB-EC"/>
</dbReference>
<dbReference type="GO" id="GO:0006400">
    <property type="term" value="P:tRNA modification"/>
    <property type="evidence" value="ECO:0007669"/>
    <property type="project" value="UniProtKB-UniRule"/>
</dbReference>
<dbReference type="CDD" id="cd01992">
    <property type="entry name" value="TilS_N"/>
    <property type="match status" value="1"/>
</dbReference>
<dbReference type="Gene3D" id="3.40.50.620">
    <property type="entry name" value="HUPs"/>
    <property type="match status" value="1"/>
</dbReference>
<dbReference type="HAMAP" id="MF_01161">
    <property type="entry name" value="tRNA_Ile_lys_synt"/>
    <property type="match status" value="1"/>
</dbReference>
<dbReference type="InterPro" id="IPR014729">
    <property type="entry name" value="Rossmann-like_a/b/a_fold"/>
</dbReference>
<dbReference type="InterPro" id="IPR011063">
    <property type="entry name" value="TilS/TtcA_N"/>
</dbReference>
<dbReference type="InterPro" id="IPR012094">
    <property type="entry name" value="tRNA_Ile_lys_synt"/>
</dbReference>
<dbReference type="InterPro" id="IPR012795">
    <property type="entry name" value="tRNA_Ile_lys_synt_N"/>
</dbReference>
<dbReference type="NCBIfam" id="TIGR02432">
    <property type="entry name" value="lysidine_TilS_N"/>
    <property type="match status" value="1"/>
</dbReference>
<dbReference type="PANTHER" id="PTHR43033">
    <property type="entry name" value="TRNA(ILE)-LYSIDINE SYNTHASE-RELATED"/>
    <property type="match status" value="1"/>
</dbReference>
<dbReference type="PANTHER" id="PTHR43033:SF1">
    <property type="entry name" value="TRNA(ILE)-LYSIDINE SYNTHASE-RELATED"/>
    <property type="match status" value="1"/>
</dbReference>
<dbReference type="Pfam" id="PF01171">
    <property type="entry name" value="ATP_bind_3"/>
    <property type="match status" value="1"/>
</dbReference>
<dbReference type="SUPFAM" id="SSF52402">
    <property type="entry name" value="Adenine nucleotide alpha hydrolases-like"/>
    <property type="match status" value="1"/>
</dbReference>
<comment type="function">
    <text evidence="1">Ligates lysine onto the cytidine present at position 34 of the AUA codon-specific tRNA(Ile) that contains the anticodon CAU, in an ATP-dependent manner. Cytidine is converted to lysidine, thus changing the amino acid specificity of the tRNA from methionine to isoleucine.</text>
</comment>
<comment type="catalytic activity">
    <reaction evidence="1">
        <text>cytidine(34) in tRNA(Ile2) + L-lysine + ATP = lysidine(34) in tRNA(Ile2) + AMP + diphosphate + H(+)</text>
        <dbReference type="Rhea" id="RHEA:43744"/>
        <dbReference type="Rhea" id="RHEA-COMP:10625"/>
        <dbReference type="Rhea" id="RHEA-COMP:10670"/>
        <dbReference type="ChEBI" id="CHEBI:15378"/>
        <dbReference type="ChEBI" id="CHEBI:30616"/>
        <dbReference type="ChEBI" id="CHEBI:32551"/>
        <dbReference type="ChEBI" id="CHEBI:33019"/>
        <dbReference type="ChEBI" id="CHEBI:82748"/>
        <dbReference type="ChEBI" id="CHEBI:83665"/>
        <dbReference type="ChEBI" id="CHEBI:456215"/>
        <dbReference type="EC" id="6.3.4.19"/>
    </reaction>
</comment>
<comment type="subcellular location">
    <subcellularLocation>
        <location evidence="1">Cytoplasm</location>
    </subcellularLocation>
</comment>
<comment type="domain">
    <text>The N-terminal region contains the highly conserved SGGXDS motif, predicted to be a P-loop motif involved in ATP binding.</text>
</comment>
<comment type="similarity">
    <text evidence="1">Belongs to the tRNA(Ile)-lysidine synthase family.</text>
</comment>
<protein>
    <recommendedName>
        <fullName evidence="1">tRNA(Ile)-lysidine synthase</fullName>
        <ecNumber evidence="1">6.3.4.19</ecNumber>
    </recommendedName>
    <alternativeName>
        <fullName evidence="1">tRNA(Ile)-2-lysyl-cytidine synthase</fullName>
    </alternativeName>
    <alternativeName>
        <fullName evidence="1">tRNA(Ile)-lysidine synthetase</fullName>
    </alternativeName>
</protein>
<feature type="chain" id="PRO_0000181702" description="tRNA(Ile)-lysidine synthase">
    <location>
        <begin position="1"/>
        <end position="423"/>
    </location>
</feature>
<feature type="binding site" evidence="1">
    <location>
        <begin position="43"/>
        <end position="48"/>
    </location>
    <ligand>
        <name>ATP</name>
        <dbReference type="ChEBI" id="CHEBI:30616"/>
    </ligand>
</feature>
<reference key="1">
    <citation type="journal article" date="2003" name="Proc. Natl. Acad. Sci. U.S.A.">
        <title>The complete genome sequence of the carcinogenic bacterium Helicobacter hepaticus.</title>
        <authorList>
            <person name="Suerbaum S."/>
            <person name="Josenhans C."/>
            <person name="Sterzenbach T."/>
            <person name="Drescher B."/>
            <person name="Brandt P."/>
            <person name="Bell M."/>
            <person name="Droege M."/>
            <person name="Fartmann B."/>
            <person name="Fischer H.-P."/>
            <person name="Ge Z."/>
            <person name="Hoerster A."/>
            <person name="Holland R."/>
            <person name="Klein K."/>
            <person name="Koenig J."/>
            <person name="Macko L."/>
            <person name="Mendz G.L."/>
            <person name="Nyakatura G."/>
            <person name="Schauer D.B."/>
            <person name="Shen Z."/>
            <person name="Weber J."/>
            <person name="Frosch M."/>
            <person name="Fox J.G."/>
        </authorList>
    </citation>
    <scope>NUCLEOTIDE SEQUENCE [LARGE SCALE GENOMIC DNA]</scope>
    <source>
        <strain>ATCC 51449 / 3B1</strain>
    </source>
</reference>
<name>TILS_HELHP</name>
<proteinExistence type="inferred from homology"/>